<evidence type="ECO:0000255" key="1">
    <source>
        <dbReference type="HAMAP-Rule" id="MF_00060"/>
    </source>
</evidence>
<evidence type="ECO:0000305" key="2"/>
<proteinExistence type="inferred from homology"/>
<dbReference type="EC" id="3.1.3.5" evidence="1"/>
<dbReference type="EMBL" id="CP000386">
    <property type="protein sequence ID" value="ABG05240.1"/>
    <property type="status" value="ALT_INIT"/>
    <property type="molecule type" value="Genomic_DNA"/>
</dbReference>
<dbReference type="RefSeq" id="WP_041328291.1">
    <property type="nucleotide sequence ID" value="NC_008148.1"/>
</dbReference>
<dbReference type="SMR" id="Q1ATN8"/>
<dbReference type="STRING" id="266117.Rxyl_2311"/>
<dbReference type="KEGG" id="rxy:Rxyl_2311"/>
<dbReference type="eggNOG" id="COG0496">
    <property type="taxonomic scope" value="Bacteria"/>
</dbReference>
<dbReference type="HOGENOM" id="CLU_045192_1_3_11"/>
<dbReference type="OrthoDB" id="9780815at2"/>
<dbReference type="Proteomes" id="UP000006637">
    <property type="component" value="Chromosome"/>
</dbReference>
<dbReference type="GO" id="GO:0005737">
    <property type="term" value="C:cytoplasm"/>
    <property type="evidence" value="ECO:0007669"/>
    <property type="project" value="UniProtKB-SubCell"/>
</dbReference>
<dbReference type="GO" id="GO:0008253">
    <property type="term" value="F:5'-nucleotidase activity"/>
    <property type="evidence" value="ECO:0007669"/>
    <property type="project" value="UniProtKB-UniRule"/>
</dbReference>
<dbReference type="GO" id="GO:0046872">
    <property type="term" value="F:metal ion binding"/>
    <property type="evidence" value="ECO:0007669"/>
    <property type="project" value="UniProtKB-UniRule"/>
</dbReference>
<dbReference type="GO" id="GO:0000166">
    <property type="term" value="F:nucleotide binding"/>
    <property type="evidence" value="ECO:0007669"/>
    <property type="project" value="UniProtKB-KW"/>
</dbReference>
<dbReference type="Gene3D" id="3.40.1210.10">
    <property type="entry name" value="Survival protein SurE-like phosphatase/nucleotidase"/>
    <property type="match status" value="1"/>
</dbReference>
<dbReference type="HAMAP" id="MF_00060">
    <property type="entry name" value="SurE"/>
    <property type="match status" value="1"/>
</dbReference>
<dbReference type="InterPro" id="IPR030048">
    <property type="entry name" value="SurE"/>
</dbReference>
<dbReference type="InterPro" id="IPR002828">
    <property type="entry name" value="SurE-like_Pase/nucleotidase"/>
</dbReference>
<dbReference type="InterPro" id="IPR036523">
    <property type="entry name" value="SurE-like_sf"/>
</dbReference>
<dbReference type="NCBIfam" id="NF001490">
    <property type="entry name" value="PRK00346.1-4"/>
    <property type="match status" value="1"/>
</dbReference>
<dbReference type="NCBIfam" id="TIGR00087">
    <property type="entry name" value="surE"/>
    <property type="match status" value="1"/>
</dbReference>
<dbReference type="PANTHER" id="PTHR30457">
    <property type="entry name" value="5'-NUCLEOTIDASE SURE"/>
    <property type="match status" value="1"/>
</dbReference>
<dbReference type="PANTHER" id="PTHR30457:SF0">
    <property type="entry name" value="PHOSPHATASE, PUTATIVE (AFU_ORTHOLOGUE AFUA_4G01070)-RELATED"/>
    <property type="match status" value="1"/>
</dbReference>
<dbReference type="Pfam" id="PF01975">
    <property type="entry name" value="SurE"/>
    <property type="match status" value="1"/>
</dbReference>
<dbReference type="SUPFAM" id="SSF64167">
    <property type="entry name" value="SurE-like"/>
    <property type="match status" value="1"/>
</dbReference>
<keyword id="KW-0963">Cytoplasm</keyword>
<keyword id="KW-0378">Hydrolase</keyword>
<keyword id="KW-0479">Metal-binding</keyword>
<keyword id="KW-0547">Nucleotide-binding</keyword>
<keyword id="KW-1185">Reference proteome</keyword>
<feature type="chain" id="PRO_0000335268" description="5'-nucleotidase SurE">
    <location>
        <begin position="1"/>
        <end position="265"/>
    </location>
</feature>
<feature type="binding site" evidence="1">
    <location>
        <position position="8"/>
    </location>
    <ligand>
        <name>a divalent metal cation</name>
        <dbReference type="ChEBI" id="CHEBI:60240"/>
    </ligand>
</feature>
<feature type="binding site" evidence="1">
    <location>
        <position position="9"/>
    </location>
    <ligand>
        <name>a divalent metal cation</name>
        <dbReference type="ChEBI" id="CHEBI:60240"/>
    </ligand>
</feature>
<feature type="binding site" evidence="1">
    <location>
        <position position="39"/>
    </location>
    <ligand>
        <name>a divalent metal cation</name>
        <dbReference type="ChEBI" id="CHEBI:60240"/>
    </ligand>
</feature>
<feature type="binding site" evidence="1">
    <location>
        <position position="96"/>
    </location>
    <ligand>
        <name>a divalent metal cation</name>
        <dbReference type="ChEBI" id="CHEBI:60240"/>
    </ligand>
</feature>
<organism>
    <name type="scientific">Rubrobacter xylanophilus (strain DSM 9941 / JCM 11954 / NBRC 16129 / PRD-1)</name>
    <dbReference type="NCBI Taxonomy" id="266117"/>
    <lineage>
        <taxon>Bacteria</taxon>
        <taxon>Bacillati</taxon>
        <taxon>Actinomycetota</taxon>
        <taxon>Rubrobacteria</taxon>
        <taxon>Rubrobacterales</taxon>
        <taxon>Rubrobacteraceae</taxon>
        <taxon>Rubrobacter</taxon>
    </lineage>
</organism>
<reference key="1">
    <citation type="submission" date="2006-06" db="EMBL/GenBank/DDBJ databases">
        <title>Complete sequence of Rubrobacter xylanophilus DSM 9941.</title>
        <authorList>
            <consortium name="US DOE Joint Genome Institute"/>
            <person name="Copeland A."/>
            <person name="Lucas S."/>
            <person name="Lapidus A."/>
            <person name="Barry K."/>
            <person name="Detter J.C."/>
            <person name="Glavina del Rio T."/>
            <person name="Hammon N."/>
            <person name="Israni S."/>
            <person name="Dalin E."/>
            <person name="Tice H."/>
            <person name="Pitluck S."/>
            <person name="Munk A.C."/>
            <person name="Brettin T."/>
            <person name="Bruce D."/>
            <person name="Han C."/>
            <person name="Tapia R."/>
            <person name="Gilna P."/>
            <person name="Schmutz J."/>
            <person name="Larimer F."/>
            <person name="Land M."/>
            <person name="Hauser L."/>
            <person name="Kyrpides N."/>
            <person name="Lykidis A."/>
            <person name="da Costa M.S."/>
            <person name="Rainey F.A."/>
            <person name="Empadinhas N."/>
            <person name="Jolivet E."/>
            <person name="Battista J.R."/>
            <person name="Richardson P."/>
        </authorList>
    </citation>
    <scope>NUCLEOTIDE SEQUENCE [LARGE SCALE GENOMIC DNA]</scope>
    <source>
        <strain>DSM 9941 / JCM 11954 / NBRC 16129 / PRD-1</strain>
    </source>
</reference>
<accession>Q1ATN8</accession>
<name>SURE_RUBXD</name>
<comment type="function">
    <text evidence="1">Nucleotidase that shows phosphatase activity on nucleoside 5'-monophosphates.</text>
</comment>
<comment type="catalytic activity">
    <reaction evidence="1">
        <text>a ribonucleoside 5'-phosphate + H2O = a ribonucleoside + phosphate</text>
        <dbReference type="Rhea" id="RHEA:12484"/>
        <dbReference type="ChEBI" id="CHEBI:15377"/>
        <dbReference type="ChEBI" id="CHEBI:18254"/>
        <dbReference type="ChEBI" id="CHEBI:43474"/>
        <dbReference type="ChEBI" id="CHEBI:58043"/>
        <dbReference type="EC" id="3.1.3.5"/>
    </reaction>
</comment>
<comment type="cofactor">
    <cofactor evidence="1">
        <name>a divalent metal cation</name>
        <dbReference type="ChEBI" id="CHEBI:60240"/>
    </cofactor>
    <text evidence="1">Binds 1 divalent metal cation per subunit.</text>
</comment>
<comment type="subcellular location">
    <subcellularLocation>
        <location evidence="1">Cytoplasm</location>
    </subcellularLocation>
</comment>
<comment type="similarity">
    <text evidence="1">Belongs to the SurE nucleotidase family.</text>
</comment>
<comment type="sequence caution" evidence="2">
    <conflict type="erroneous initiation">
        <sequence resource="EMBL-CDS" id="ABG05240"/>
    </conflict>
</comment>
<sequence>MRIVLTNDDGIEAPGLLAARRALEEVGEVITVAPDRNRSGVGRSITFGAELYVEERRMADGGVGYACSGTPVDCVRLVALGMVEGFRPDIVVSGINHGENLGDDITYSGTVAGALEAIVIGVPGIAVSLSTGRPWHGADGREELHFEPVARFTARLAGLALRDLPPGRILNVNAPNLPEEELEGARVTRLGRRFYQDELIEVRDKNGRVGYNIYNNPPGHHDEEGTDFAALQSRRISVTPVHLDLTDTAGLKELESWDIGRLVVR</sequence>
<protein>
    <recommendedName>
        <fullName evidence="1">5'-nucleotidase SurE</fullName>
        <ecNumber evidence="1">3.1.3.5</ecNumber>
    </recommendedName>
    <alternativeName>
        <fullName evidence="1">Nucleoside 5'-monophosphate phosphohydrolase</fullName>
    </alternativeName>
</protein>
<gene>
    <name evidence="1" type="primary">surE</name>
    <name type="ordered locus">Rxyl_2311</name>
</gene>